<name>CH10_NEIGO</name>
<keyword id="KW-0143">Chaperone</keyword>
<keyword id="KW-0963">Cytoplasm</keyword>
<feature type="chain" id="PRO_0000174791" description="Co-chaperonin GroES">
    <location>
        <begin position="1"/>
        <end position="96"/>
    </location>
</feature>
<evidence type="ECO:0000255" key="1">
    <source>
        <dbReference type="HAMAP-Rule" id="MF_00580"/>
    </source>
</evidence>
<evidence type="ECO:0000305" key="2"/>
<gene>
    <name evidence="1" type="primary">groES</name>
    <name evidence="1" type="synonym">groS</name>
</gene>
<accession>P77913</accession>
<comment type="function">
    <text evidence="1">Together with the chaperonin GroEL, plays an essential role in assisting protein folding. The GroEL-GroES system forms a nano-cage that allows encapsulation of the non-native substrate proteins and provides a physical environment optimized to promote and accelerate protein folding. GroES binds to the apical surface of the GroEL ring, thereby capping the opening of the GroEL channel.</text>
</comment>
<comment type="subunit">
    <text evidence="1">Heptamer of 7 subunits arranged in a ring. Interacts with the chaperonin GroEL.</text>
</comment>
<comment type="subcellular location">
    <subcellularLocation>
        <location evidence="1">Cytoplasm</location>
    </subcellularLocation>
</comment>
<comment type="similarity">
    <text evidence="1 2">Belongs to the GroES chaperonin family.</text>
</comment>
<protein>
    <recommendedName>
        <fullName evidence="1">Co-chaperonin GroES</fullName>
    </recommendedName>
    <alternativeName>
        <fullName evidence="1">10 kDa chaperonin</fullName>
    </alternativeName>
    <alternativeName>
        <fullName evidence="1">Chaperonin-10</fullName>
        <shortName evidence="1">Cpn10</shortName>
    </alternativeName>
</protein>
<sequence>MTIRPLHDRVVVKRLEAEEKTASGIVLPGAAAEKPDMGEVIAVGAGKIGKDGARRPLDVKAGDKIIFGKYSGQTVKADGEELLVMREEDIFGIVEK</sequence>
<reference key="1">
    <citation type="journal article" date="1997" name="Gene">
        <title>Transcriptional analysis of the groESL operon of Neisseria gonorrhoeae.</title>
        <authorList>
            <person name="Tauschek M."/>
            <person name="Hamilton C.W."/>
            <person name="Hall L.A."/>
            <person name="Chomvarin C."/>
            <person name="Fyfe J.A.M."/>
            <person name="Davies J.K."/>
        </authorList>
    </citation>
    <scope>NUCLEOTIDE SEQUENCE [GENOMIC DNA]</scope>
    <source>
        <strain>MS11A</strain>
    </source>
</reference>
<organism>
    <name type="scientific">Neisseria gonorrhoeae</name>
    <dbReference type="NCBI Taxonomy" id="485"/>
    <lineage>
        <taxon>Bacteria</taxon>
        <taxon>Pseudomonadati</taxon>
        <taxon>Pseudomonadota</taxon>
        <taxon>Betaproteobacteria</taxon>
        <taxon>Neisseriales</taxon>
        <taxon>Neisseriaceae</taxon>
        <taxon>Neisseria</taxon>
    </lineage>
</organism>
<dbReference type="EMBL" id="U64996">
    <property type="protein sequence ID" value="AAC45326.1"/>
    <property type="molecule type" value="Genomic_DNA"/>
</dbReference>
<dbReference type="RefSeq" id="WP_003687059.1">
    <property type="nucleotide sequence ID" value="NZ_WHPL01000002.1"/>
</dbReference>
<dbReference type="SMR" id="P77913"/>
<dbReference type="OMA" id="KVFYRQW"/>
<dbReference type="GO" id="GO:0005737">
    <property type="term" value="C:cytoplasm"/>
    <property type="evidence" value="ECO:0007669"/>
    <property type="project" value="UniProtKB-SubCell"/>
</dbReference>
<dbReference type="GO" id="GO:0005524">
    <property type="term" value="F:ATP binding"/>
    <property type="evidence" value="ECO:0007669"/>
    <property type="project" value="InterPro"/>
</dbReference>
<dbReference type="GO" id="GO:0046872">
    <property type="term" value="F:metal ion binding"/>
    <property type="evidence" value="ECO:0007669"/>
    <property type="project" value="TreeGrafter"/>
</dbReference>
<dbReference type="GO" id="GO:0044183">
    <property type="term" value="F:protein folding chaperone"/>
    <property type="evidence" value="ECO:0007669"/>
    <property type="project" value="InterPro"/>
</dbReference>
<dbReference type="GO" id="GO:0051087">
    <property type="term" value="F:protein-folding chaperone binding"/>
    <property type="evidence" value="ECO:0007669"/>
    <property type="project" value="TreeGrafter"/>
</dbReference>
<dbReference type="GO" id="GO:0051082">
    <property type="term" value="F:unfolded protein binding"/>
    <property type="evidence" value="ECO:0007669"/>
    <property type="project" value="TreeGrafter"/>
</dbReference>
<dbReference type="GO" id="GO:0051085">
    <property type="term" value="P:chaperone cofactor-dependent protein refolding"/>
    <property type="evidence" value="ECO:0007669"/>
    <property type="project" value="TreeGrafter"/>
</dbReference>
<dbReference type="CDD" id="cd00320">
    <property type="entry name" value="cpn10"/>
    <property type="match status" value="1"/>
</dbReference>
<dbReference type="FunFam" id="2.30.33.40:FF:000001">
    <property type="entry name" value="10 kDa chaperonin"/>
    <property type="match status" value="1"/>
</dbReference>
<dbReference type="Gene3D" id="2.30.33.40">
    <property type="entry name" value="GroES chaperonin"/>
    <property type="match status" value="1"/>
</dbReference>
<dbReference type="HAMAP" id="MF_00580">
    <property type="entry name" value="CH10"/>
    <property type="match status" value="1"/>
</dbReference>
<dbReference type="InterPro" id="IPR020818">
    <property type="entry name" value="Chaperonin_GroES"/>
</dbReference>
<dbReference type="InterPro" id="IPR037124">
    <property type="entry name" value="Chaperonin_GroES_sf"/>
</dbReference>
<dbReference type="InterPro" id="IPR018369">
    <property type="entry name" value="Chaprnonin_Cpn10_CS"/>
</dbReference>
<dbReference type="InterPro" id="IPR011032">
    <property type="entry name" value="GroES-like_sf"/>
</dbReference>
<dbReference type="NCBIfam" id="NF001527">
    <property type="entry name" value="PRK00364.1-2"/>
    <property type="match status" value="1"/>
</dbReference>
<dbReference type="NCBIfam" id="NF001531">
    <property type="entry name" value="PRK00364.2-2"/>
    <property type="match status" value="1"/>
</dbReference>
<dbReference type="NCBIfam" id="NF001533">
    <property type="entry name" value="PRK00364.2-4"/>
    <property type="match status" value="1"/>
</dbReference>
<dbReference type="PANTHER" id="PTHR10772">
    <property type="entry name" value="10 KDA HEAT SHOCK PROTEIN"/>
    <property type="match status" value="1"/>
</dbReference>
<dbReference type="PANTHER" id="PTHR10772:SF58">
    <property type="entry name" value="CO-CHAPERONIN GROES"/>
    <property type="match status" value="1"/>
</dbReference>
<dbReference type="Pfam" id="PF00166">
    <property type="entry name" value="Cpn10"/>
    <property type="match status" value="1"/>
</dbReference>
<dbReference type="PRINTS" id="PR00297">
    <property type="entry name" value="CHAPERONIN10"/>
</dbReference>
<dbReference type="SMART" id="SM00883">
    <property type="entry name" value="Cpn10"/>
    <property type="match status" value="1"/>
</dbReference>
<dbReference type="SUPFAM" id="SSF50129">
    <property type="entry name" value="GroES-like"/>
    <property type="match status" value="1"/>
</dbReference>
<dbReference type="PROSITE" id="PS00681">
    <property type="entry name" value="CHAPERONINS_CPN10"/>
    <property type="match status" value="1"/>
</dbReference>
<proteinExistence type="inferred from homology"/>